<feature type="chain" id="PRO_0000213718" description="Annulin">
    <location>
        <begin position="1"/>
        <end position="772"/>
    </location>
</feature>
<feature type="region of interest" description="Disordered" evidence="4">
    <location>
        <begin position="15"/>
        <end position="57"/>
    </location>
</feature>
<feature type="compositionally biased region" description="Pro residues" evidence="4">
    <location>
        <begin position="38"/>
        <end position="53"/>
    </location>
</feature>
<feature type="active site" evidence="3">
    <location>
        <position position="400"/>
    </location>
</feature>
<feature type="active site" evidence="3">
    <location>
        <position position="427"/>
    </location>
</feature>
<feature type="binding site" evidence="1">
    <location>
        <position position="467"/>
    </location>
    <ligand>
        <name>Ca(2+)</name>
        <dbReference type="ChEBI" id="CHEBI:29108"/>
    </ligand>
</feature>
<feature type="binding site" evidence="1">
    <location>
        <position position="469"/>
    </location>
    <ligand>
        <name>Ca(2+)</name>
        <dbReference type="ChEBI" id="CHEBI:29108"/>
    </ligand>
</feature>
<feature type="binding site" evidence="1">
    <location>
        <position position="517"/>
    </location>
    <ligand>
        <name>Ca(2+)</name>
        <dbReference type="ChEBI" id="CHEBI:29108"/>
    </ligand>
</feature>
<feature type="binding site" evidence="1">
    <location>
        <position position="522"/>
    </location>
    <ligand>
        <name>Ca(2+)</name>
        <dbReference type="ChEBI" id="CHEBI:29108"/>
    </ligand>
</feature>
<feature type="lipid moiety-binding region" description="S-palmitoyl cysteine" evidence="2">
    <location>
        <position position="4"/>
    </location>
</feature>
<feature type="lipid moiety-binding region" description="S-palmitoyl cysteine" evidence="2">
    <location>
        <position position="5"/>
    </location>
</feature>
<protein>
    <recommendedName>
        <fullName>Annulin</fullName>
    </recommendedName>
    <alternativeName>
        <fullName>Protein-glutamine gamma-glutamyltransferase</fullName>
        <ecNumber>2.3.2.13</ecNumber>
    </alternativeName>
    <alternativeName>
        <fullName>Transglutaminase</fullName>
    </alternativeName>
</protein>
<reference key="1">
    <citation type="journal article" date="1992" name="Dev. Biol.">
        <title>Annulin, a protein expressed at limb segment boundaries in the grasshopper embryo, is homologous to protein cross-linking transglutaminases.</title>
        <authorList>
            <person name="Singer M.A."/>
            <person name="Hortsch M."/>
            <person name="Goodman C.S."/>
            <person name="Bentley D."/>
        </authorList>
    </citation>
    <scope>NUCLEOTIDE SEQUENCE [MRNA]</scope>
</reference>
<keyword id="KW-0012">Acyltransferase</keyword>
<keyword id="KW-0106">Calcium</keyword>
<keyword id="KW-1003">Cell membrane</keyword>
<keyword id="KW-0449">Lipoprotein</keyword>
<keyword id="KW-0472">Membrane</keyword>
<keyword id="KW-0479">Metal-binding</keyword>
<keyword id="KW-0564">Palmitate</keyword>
<keyword id="KW-0808">Transferase</keyword>
<comment type="function">
    <text>Participates in morphogenetic activities of the cells, maybe by stabilizing the membrane or subcortical structures of cells that are under mechanical stress. Probably catalyzes the cross-linking of proteins and the conjugation of polyamines to proteins.</text>
</comment>
<comment type="catalytic activity">
    <reaction evidence="3">
        <text>L-glutaminyl-[protein] + L-lysyl-[protein] = [protein]-L-lysyl-N(6)-5-L-glutamyl-[protein] + NH4(+)</text>
        <dbReference type="Rhea" id="RHEA:54816"/>
        <dbReference type="Rhea" id="RHEA-COMP:9752"/>
        <dbReference type="Rhea" id="RHEA-COMP:10207"/>
        <dbReference type="Rhea" id="RHEA-COMP:14005"/>
        <dbReference type="ChEBI" id="CHEBI:28938"/>
        <dbReference type="ChEBI" id="CHEBI:29969"/>
        <dbReference type="ChEBI" id="CHEBI:30011"/>
        <dbReference type="ChEBI" id="CHEBI:138370"/>
        <dbReference type="EC" id="2.3.2.13"/>
    </reaction>
</comment>
<comment type="cofactor">
    <cofactor evidence="1">
        <name>Ca(2+)</name>
        <dbReference type="ChEBI" id="CHEBI:29108"/>
    </cofactor>
    <text evidence="1">Binds 1 Ca(2+) ion per subunit.</text>
</comment>
<comment type="subcellular location">
    <subcellularLocation>
        <location>Cell membrane</location>
        <topology>Lipid-anchor</topology>
        <orientation>Cytoplasmic side</orientation>
    </subcellularLocation>
    <text>Intracellular and peripherally associated with the inner leaflet of the cell membrane, using a fatty acid linkage.</text>
</comment>
<comment type="tissue specificity">
    <text>Has an annular, or ring-like expression pattern in epithelial annuli of developing limb segment boundary cells. In embryos, it is seen in gastrulating cells, in cells surrounding rapidly dividing neuroblasts, and in muscle pioneer cells invaginating to form apodemes.</text>
</comment>
<comment type="developmental stage">
    <text>Expression of this protein in embryos and limbs is associated with areas undergoing movements, morphogenetic rearrangements, or rapid cell division. Expression of annulin precedes the first morphological signs of segmentation in the developing limbs.</text>
</comment>
<comment type="similarity">
    <text evidence="5">Belongs to the transglutaminase superfamily. Transglutaminase family.</text>
</comment>
<name>ANNU_SCHAM</name>
<dbReference type="EC" id="2.3.2.13"/>
<dbReference type="EMBL" id="M92291">
    <property type="protein sequence ID" value="AAA29806.1"/>
    <property type="molecule type" value="mRNA"/>
</dbReference>
<dbReference type="PIR" id="A48822">
    <property type="entry name" value="A48822"/>
</dbReference>
<dbReference type="SMR" id="P52183"/>
<dbReference type="OrthoDB" id="437511at2759"/>
<dbReference type="GO" id="GO:0005886">
    <property type="term" value="C:plasma membrane"/>
    <property type="evidence" value="ECO:0007669"/>
    <property type="project" value="UniProtKB-SubCell"/>
</dbReference>
<dbReference type="GO" id="GO:0046872">
    <property type="term" value="F:metal ion binding"/>
    <property type="evidence" value="ECO:0007669"/>
    <property type="project" value="UniProtKB-KW"/>
</dbReference>
<dbReference type="GO" id="GO:0003810">
    <property type="term" value="F:protein-glutamine gamma-glutamyltransferase activity"/>
    <property type="evidence" value="ECO:0007669"/>
    <property type="project" value="UniProtKB-EC"/>
</dbReference>
<dbReference type="FunFam" id="2.60.40.10:FF:000090">
    <property type="entry name" value="Protein-glutamine gamma-glutamyltransferase 2"/>
    <property type="match status" value="1"/>
</dbReference>
<dbReference type="FunFam" id="3.90.260.10:FF:000001">
    <property type="entry name" value="Protein-glutamine gamma-glutamyltransferase 2"/>
    <property type="match status" value="1"/>
</dbReference>
<dbReference type="FunFam" id="2.60.40.10:FF:000171">
    <property type="entry name" value="protein-glutamine gamma-glutamyltransferase 6"/>
    <property type="match status" value="1"/>
</dbReference>
<dbReference type="FunFam" id="2.60.40.10:FF:002167">
    <property type="entry name" value="Transglutaminase, isoform B"/>
    <property type="match status" value="1"/>
</dbReference>
<dbReference type="Gene3D" id="2.60.40.10">
    <property type="entry name" value="Immunoglobulins"/>
    <property type="match status" value="3"/>
</dbReference>
<dbReference type="Gene3D" id="3.90.260.10">
    <property type="entry name" value="Transglutaminase-like"/>
    <property type="match status" value="1"/>
</dbReference>
<dbReference type="InterPro" id="IPR013783">
    <property type="entry name" value="Ig-like_fold"/>
</dbReference>
<dbReference type="InterPro" id="IPR014756">
    <property type="entry name" value="Ig_E-set"/>
</dbReference>
<dbReference type="InterPro" id="IPR038765">
    <property type="entry name" value="Papain-like_cys_pep_sf"/>
</dbReference>
<dbReference type="InterPro" id="IPR050779">
    <property type="entry name" value="Transglutaminase"/>
</dbReference>
<dbReference type="InterPro" id="IPR002931">
    <property type="entry name" value="Transglutaminase-like"/>
</dbReference>
<dbReference type="InterPro" id="IPR036985">
    <property type="entry name" value="Transglutaminase-like_sf"/>
</dbReference>
<dbReference type="InterPro" id="IPR023608">
    <property type="entry name" value="Transglutaminase_animal"/>
</dbReference>
<dbReference type="InterPro" id="IPR013808">
    <property type="entry name" value="Transglutaminase_AS"/>
</dbReference>
<dbReference type="InterPro" id="IPR008958">
    <property type="entry name" value="Transglutaminase_C"/>
</dbReference>
<dbReference type="InterPro" id="IPR036238">
    <property type="entry name" value="Transglutaminase_C_sf"/>
</dbReference>
<dbReference type="InterPro" id="IPR001102">
    <property type="entry name" value="Transglutaminase_N"/>
</dbReference>
<dbReference type="PANTHER" id="PTHR11590">
    <property type="entry name" value="PROTEIN-GLUTAMINE GAMMA-GLUTAMYLTRANSFERASE"/>
    <property type="match status" value="1"/>
</dbReference>
<dbReference type="PANTHER" id="PTHR11590:SF69">
    <property type="entry name" value="RE08173P"/>
    <property type="match status" value="1"/>
</dbReference>
<dbReference type="Pfam" id="PF00927">
    <property type="entry name" value="Transglut_C"/>
    <property type="match status" value="2"/>
</dbReference>
<dbReference type="Pfam" id="PF01841">
    <property type="entry name" value="Transglut_core"/>
    <property type="match status" value="1"/>
</dbReference>
<dbReference type="Pfam" id="PF00868">
    <property type="entry name" value="Transglut_N"/>
    <property type="match status" value="1"/>
</dbReference>
<dbReference type="PIRSF" id="PIRSF000459">
    <property type="entry name" value="TGM_EBP42"/>
    <property type="match status" value="1"/>
</dbReference>
<dbReference type="SMART" id="SM00460">
    <property type="entry name" value="TGc"/>
    <property type="match status" value="1"/>
</dbReference>
<dbReference type="SUPFAM" id="SSF54001">
    <property type="entry name" value="Cysteine proteinases"/>
    <property type="match status" value="1"/>
</dbReference>
<dbReference type="SUPFAM" id="SSF81296">
    <property type="entry name" value="E set domains"/>
    <property type="match status" value="1"/>
</dbReference>
<dbReference type="SUPFAM" id="SSF49309">
    <property type="entry name" value="Transglutaminase, two C-terminal domains"/>
    <property type="match status" value="2"/>
</dbReference>
<dbReference type="PROSITE" id="PS00547">
    <property type="entry name" value="TRANSGLUTAMINASES"/>
    <property type="match status" value="1"/>
</dbReference>
<evidence type="ECO:0000250" key="1"/>
<evidence type="ECO:0000255" key="2"/>
<evidence type="ECO:0000255" key="3">
    <source>
        <dbReference type="PROSITE-ProRule" id="PRU10024"/>
    </source>
</evidence>
<evidence type="ECO:0000256" key="4">
    <source>
        <dbReference type="SAM" id="MobiDB-lite"/>
    </source>
</evidence>
<evidence type="ECO:0000305" key="5"/>
<accession>P52183</accession>
<organism>
    <name type="scientific">Schistocerca americana</name>
    <name type="common">American grasshopper</name>
    <dbReference type="NCBI Taxonomy" id="7009"/>
    <lineage>
        <taxon>Eukaryota</taxon>
        <taxon>Metazoa</taxon>
        <taxon>Ecdysozoa</taxon>
        <taxon>Arthropoda</taxon>
        <taxon>Hexapoda</taxon>
        <taxon>Insecta</taxon>
        <taxon>Pterygota</taxon>
        <taxon>Neoptera</taxon>
        <taxon>Polyneoptera</taxon>
        <taxon>Orthoptera</taxon>
        <taxon>Caelifera</taxon>
        <taxon>Acrididea</taxon>
        <taxon>Acridomorpha</taxon>
        <taxon>Acridoidea</taxon>
        <taxon>Acrididae</taxon>
        <taxon>Cyrtacanthacridinae</taxon>
        <taxon>Schistocerca</taxon>
    </lineage>
</organism>
<sequence>MGNCCSTFRAVFKPNEGSGGGIPLMPVRGGSTRRPDSLPKPPAAVVPSPPSPGDVPDAGVAPEVASVKEVDVLLAENGDAHRTRHYELMDREKEPRLVVRRGQPFAVSVTLSRPYNPDIDAISFVFTVEDAEKPSYGQGTLVAVPLLAKGAESGAAWNAVLDSSADDILRIQITPAADAIVGKWKMDIDTKLKNDGAVSYSYKDPFYILYNPWCRQDQVFLEGEELLQEYVLNDTGLIWRGSYNRLRPCVWKYAQFEKEILDCALYLVSKIGGVRPSECGDPVRVCRAISAAVNSPDDNGAVMGNWSNDYGGGTPPTKWIGSMKILQQFYKNKKPVKYGQCWVFAGVLTTVCRALGLPARTVTTYSAAHDTQNSLTVDYFVDDKGEIMEEMNSDSIWNFHVWTEVWMERPDLMPGDGAHYGGWQAVDSTPQELSDNMYRCGPAPVVAVKQGEVLRPYDSAYVFAEVNADKVFWRYSGPTQPLKLIRKDMLGIGQNISTKAVGRFQREDITNTYKYPEKSVEERAAMLKALRQSESLFSRYYLNEDFNDIHFNFELRDDIVIGSPFSVVVVMKNRSNQQDYTVTVLLRVDTVLYTGHVKDGVKKEKVERLIKAGAVEEVRIDVSYEDYYKHLVDQCAFNIACLATVHDTNYEYFAQDDFRVRKPDIKIKLEGEPVQGQEMSAVATLKNPLPIPVKKGQFLIEGPGIAKTQKIKLSQNIAPGEEASVNFKFTPKYDGRATIAAKFSSKELDDVDGFLNFMVEPKKEVNGTGNAA</sequence>
<proteinExistence type="evidence at transcript level"/>